<name>COX2_LYCVE</name>
<sequence length="227" mass="26033">MAYPFQLGLQDATSPIMEELLHFHDHTLMIVFLISSLVLYIISLMLTTKLTHTSTMDAQEVETVWTILPAIILILIALPSLRILYMMDEINNPSLTVKTMGHQWYWSYEYTDYEDLNFDSYMIPTQELKPGELRLLEVDNRVVLPMEMTVRMLISSEDVLHSWAVPSLGLKTDAIPGRLNQTTLMAMRPGLYYGQCSEICGSNHSFMPIVLEMVPLSYFETWSAVMV</sequence>
<evidence type="ECO:0000250" key="1">
    <source>
        <dbReference type="UniProtKB" id="P00403"/>
    </source>
</evidence>
<evidence type="ECO:0000250" key="2">
    <source>
        <dbReference type="UniProtKB" id="P00406"/>
    </source>
</evidence>
<evidence type="ECO:0000250" key="3">
    <source>
        <dbReference type="UniProtKB" id="P00410"/>
    </source>
</evidence>
<evidence type="ECO:0000250" key="4">
    <source>
        <dbReference type="UniProtKB" id="P68530"/>
    </source>
</evidence>
<evidence type="ECO:0000305" key="5"/>
<geneLocation type="mitochondrion"/>
<accession>Q7J6G2</accession>
<reference key="1">
    <citation type="journal article" date="1997" name="Syst. Biol.">
        <title>Molecular systematics of the Canidae.</title>
        <authorList>
            <person name="Wayne R.K."/>
            <person name="Geffen E."/>
            <person name="Girman D.J."/>
            <person name="Koepfli K.-P."/>
            <person name="Lau L.M."/>
            <person name="Marshall C.R."/>
        </authorList>
    </citation>
    <scope>NUCLEOTIDE SEQUENCE [GENOMIC DNA]</scope>
</reference>
<comment type="function">
    <text evidence="3">Component of the cytochrome c oxidase, the last enzyme in the mitochondrial electron transport chain which drives oxidative phosphorylation. The respiratory chain contains 3 multisubunit complexes succinate dehydrogenase (complex II, CII), ubiquinol-cytochrome c oxidoreductase (cytochrome b-c1 complex, complex III, CIII) and cytochrome c oxidase (complex IV, CIV), that cooperate to transfer electrons derived from NADH and succinate to molecular oxygen, creating an electrochemical gradient over the inner membrane that drives transmembrane transport and the ATP synthase. Cytochrome c oxidase is the component of the respiratory chain that catalyzes the reduction of oxygen to water. Electrons originating from reduced cytochrome c in the intermembrane space (IMS) are transferred via the dinuclear copper A center (CU(A)) of subunit 2 and heme A of subunit 1 to the active site in subunit 1, a binuclear center (BNC) formed by heme A3 and copper B (CU(B)). The BNC reduces molecular oxygen to 2 water molecules using 4 electrons from cytochrome c in the IMS and 4 protons from the mitochondrial matrix.</text>
</comment>
<comment type="catalytic activity">
    <reaction evidence="3">
        <text>4 Fe(II)-[cytochrome c] + O2 + 8 H(+)(in) = 4 Fe(III)-[cytochrome c] + 2 H2O + 4 H(+)(out)</text>
        <dbReference type="Rhea" id="RHEA:11436"/>
        <dbReference type="Rhea" id="RHEA-COMP:10350"/>
        <dbReference type="Rhea" id="RHEA-COMP:14399"/>
        <dbReference type="ChEBI" id="CHEBI:15377"/>
        <dbReference type="ChEBI" id="CHEBI:15378"/>
        <dbReference type="ChEBI" id="CHEBI:15379"/>
        <dbReference type="ChEBI" id="CHEBI:29033"/>
        <dbReference type="ChEBI" id="CHEBI:29034"/>
        <dbReference type="EC" id="7.1.1.9"/>
    </reaction>
    <physiologicalReaction direction="left-to-right" evidence="3">
        <dbReference type="Rhea" id="RHEA:11437"/>
    </physiologicalReaction>
</comment>
<comment type="cofactor">
    <cofactor evidence="4">
        <name>Cu cation</name>
        <dbReference type="ChEBI" id="CHEBI:23378"/>
    </cofactor>
    <text evidence="4">Binds a dinuclear copper A center per subunit.</text>
</comment>
<comment type="subunit">
    <text evidence="1 4">Component of the cytochrome c oxidase (complex IV, CIV), a multisubunit enzyme composed of 14 subunits. The complex is composed of a catalytic core of 3 subunits MT-CO1, MT-CO2 and MT-CO3, encoded in the mitochondrial DNA, and 11 supernumerary subunits COX4I, COX5A, COX5B, COX6A, COX6B, COX6C, COX7A, COX7B, COX7C, COX8 and NDUFA4, which are encoded in the nuclear genome. The complex exists as a monomer or a dimer and forms supercomplexes (SCs) in the inner mitochondrial membrane with NADH-ubiquinone oxidoreductase (complex I, CI) and ubiquinol-cytochrome c oxidoreductase (cytochrome b-c1 complex, complex III, CIII), resulting in different assemblies (supercomplex SCI(1)III(2)IV(1) and megacomplex MCI(2)III(2)IV(2)) (By similarity). Found in a complex with TMEM177, COA6, COX18, COX20, SCO1 and SCO2. Interacts with TMEM177 in a COX20-dependent manner. Interacts with COX20. Interacts with COX16 (By similarity).</text>
</comment>
<comment type="subcellular location">
    <subcellularLocation>
        <location evidence="4">Mitochondrion inner membrane</location>
        <topology evidence="4">Multi-pass membrane protein</topology>
    </subcellularLocation>
</comment>
<comment type="similarity">
    <text evidence="5">Belongs to the cytochrome c oxidase subunit 2 family.</text>
</comment>
<gene>
    <name type="primary">MT-CO2</name>
    <name type="synonym">COII</name>
    <name type="synonym">COX2</name>
    <name type="synonym">COXII</name>
    <name type="synonym">MTCO2</name>
</gene>
<feature type="chain" id="PRO_0000183675" description="Cytochrome c oxidase subunit 2">
    <location>
        <begin position="1"/>
        <end position="227"/>
    </location>
</feature>
<feature type="topological domain" description="Mitochondrial intermembrane" evidence="4">
    <location>
        <begin position="1"/>
        <end position="14"/>
    </location>
</feature>
<feature type="transmembrane region" description="Helical; Name=I" evidence="4">
    <location>
        <begin position="15"/>
        <end position="45"/>
    </location>
</feature>
<feature type="topological domain" description="Mitochondrial matrix" evidence="4">
    <location>
        <begin position="46"/>
        <end position="59"/>
    </location>
</feature>
<feature type="transmembrane region" description="Helical; Name=II" evidence="4">
    <location>
        <begin position="60"/>
        <end position="87"/>
    </location>
</feature>
<feature type="topological domain" description="Mitochondrial intermembrane" evidence="4">
    <location>
        <begin position="88"/>
        <end position="227"/>
    </location>
</feature>
<feature type="binding site" evidence="4">
    <location>
        <position position="161"/>
    </location>
    <ligand>
        <name>Cu cation</name>
        <dbReference type="ChEBI" id="CHEBI:23378"/>
        <label>A1</label>
    </ligand>
</feature>
<feature type="binding site" evidence="4">
    <location>
        <position position="196"/>
    </location>
    <ligand>
        <name>Cu cation</name>
        <dbReference type="ChEBI" id="CHEBI:23378"/>
        <label>A1</label>
    </ligand>
</feature>
<feature type="binding site" evidence="4">
    <location>
        <position position="196"/>
    </location>
    <ligand>
        <name>Cu cation</name>
        <dbReference type="ChEBI" id="CHEBI:23378"/>
        <label>A2</label>
    </ligand>
</feature>
<feature type="binding site" evidence="4">
    <location>
        <position position="198"/>
    </location>
    <ligand>
        <name>Cu cation</name>
        <dbReference type="ChEBI" id="CHEBI:23378"/>
        <label>A2</label>
    </ligand>
</feature>
<feature type="binding site" evidence="4">
    <location>
        <position position="198"/>
    </location>
    <ligand>
        <name>Mg(2+)</name>
        <dbReference type="ChEBI" id="CHEBI:18420"/>
        <note>ligand shared with MT-CO1</note>
    </ligand>
</feature>
<feature type="binding site" evidence="4">
    <location>
        <position position="200"/>
    </location>
    <ligand>
        <name>Cu cation</name>
        <dbReference type="ChEBI" id="CHEBI:23378"/>
        <label>A1</label>
    </ligand>
</feature>
<feature type="binding site" evidence="4">
    <location>
        <position position="200"/>
    </location>
    <ligand>
        <name>Cu cation</name>
        <dbReference type="ChEBI" id="CHEBI:23378"/>
        <label>A2</label>
    </ligand>
</feature>
<feature type="binding site" evidence="4">
    <location>
        <position position="204"/>
    </location>
    <ligand>
        <name>Cu cation</name>
        <dbReference type="ChEBI" id="CHEBI:23378"/>
        <label>A2</label>
    </ligand>
</feature>
<feature type="binding site" evidence="4">
    <location>
        <position position="207"/>
    </location>
    <ligand>
        <name>Cu cation</name>
        <dbReference type="ChEBI" id="CHEBI:23378"/>
        <label>A1</label>
    </ligand>
</feature>
<feature type="modified residue" description="Phosphotyrosine" evidence="2">
    <location>
        <position position="218"/>
    </location>
</feature>
<dbReference type="EC" id="7.1.1.9"/>
<dbReference type="EMBL" id="AF028220">
    <property type="protein sequence ID" value="AAC00113.1"/>
    <property type="molecule type" value="Genomic_DNA"/>
</dbReference>
<dbReference type="SMR" id="Q7J6G2"/>
<dbReference type="GO" id="GO:0005743">
    <property type="term" value="C:mitochondrial inner membrane"/>
    <property type="evidence" value="ECO:0007669"/>
    <property type="project" value="UniProtKB-SubCell"/>
</dbReference>
<dbReference type="GO" id="GO:0045277">
    <property type="term" value="C:respiratory chain complex IV"/>
    <property type="evidence" value="ECO:0000250"/>
    <property type="project" value="UniProtKB"/>
</dbReference>
<dbReference type="GO" id="GO:0005507">
    <property type="term" value="F:copper ion binding"/>
    <property type="evidence" value="ECO:0007669"/>
    <property type="project" value="InterPro"/>
</dbReference>
<dbReference type="GO" id="GO:0004129">
    <property type="term" value="F:cytochrome-c oxidase activity"/>
    <property type="evidence" value="ECO:0007669"/>
    <property type="project" value="UniProtKB-EC"/>
</dbReference>
<dbReference type="GO" id="GO:0042773">
    <property type="term" value="P:ATP synthesis coupled electron transport"/>
    <property type="evidence" value="ECO:0007669"/>
    <property type="project" value="TreeGrafter"/>
</dbReference>
<dbReference type="CDD" id="cd13912">
    <property type="entry name" value="CcO_II_C"/>
    <property type="match status" value="1"/>
</dbReference>
<dbReference type="FunFam" id="1.10.287.90:FF:000001">
    <property type="entry name" value="Cytochrome c oxidase subunit 2"/>
    <property type="match status" value="1"/>
</dbReference>
<dbReference type="FunFam" id="2.60.40.420:FF:000001">
    <property type="entry name" value="Cytochrome c oxidase subunit 2"/>
    <property type="match status" value="1"/>
</dbReference>
<dbReference type="Gene3D" id="1.10.287.90">
    <property type="match status" value="1"/>
</dbReference>
<dbReference type="Gene3D" id="2.60.40.420">
    <property type="entry name" value="Cupredoxins - blue copper proteins"/>
    <property type="match status" value="1"/>
</dbReference>
<dbReference type="InterPro" id="IPR045187">
    <property type="entry name" value="CcO_II"/>
</dbReference>
<dbReference type="InterPro" id="IPR002429">
    <property type="entry name" value="CcO_II-like_C"/>
</dbReference>
<dbReference type="InterPro" id="IPR034210">
    <property type="entry name" value="CcO_II_C"/>
</dbReference>
<dbReference type="InterPro" id="IPR001505">
    <property type="entry name" value="Copper_CuA"/>
</dbReference>
<dbReference type="InterPro" id="IPR008972">
    <property type="entry name" value="Cupredoxin"/>
</dbReference>
<dbReference type="InterPro" id="IPR014222">
    <property type="entry name" value="Cyt_c_oxidase_su2"/>
</dbReference>
<dbReference type="InterPro" id="IPR011759">
    <property type="entry name" value="Cyt_c_oxidase_su2_TM_dom"/>
</dbReference>
<dbReference type="InterPro" id="IPR036257">
    <property type="entry name" value="Cyt_c_oxidase_su2_TM_sf"/>
</dbReference>
<dbReference type="NCBIfam" id="TIGR02866">
    <property type="entry name" value="CoxB"/>
    <property type="match status" value="1"/>
</dbReference>
<dbReference type="PANTHER" id="PTHR22888:SF9">
    <property type="entry name" value="CYTOCHROME C OXIDASE SUBUNIT 2"/>
    <property type="match status" value="1"/>
</dbReference>
<dbReference type="PANTHER" id="PTHR22888">
    <property type="entry name" value="CYTOCHROME C OXIDASE, SUBUNIT II"/>
    <property type="match status" value="1"/>
</dbReference>
<dbReference type="Pfam" id="PF00116">
    <property type="entry name" value="COX2"/>
    <property type="match status" value="1"/>
</dbReference>
<dbReference type="Pfam" id="PF02790">
    <property type="entry name" value="COX2_TM"/>
    <property type="match status" value="1"/>
</dbReference>
<dbReference type="PRINTS" id="PR01166">
    <property type="entry name" value="CYCOXIDASEII"/>
</dbReference>
<dbReference type="SUPFAM" id="SSF49503">
    <property type="entry name" value="Cupredoxins"/>
    <property type="match status" value="1"/>
</dbReference>
<dbReference type="SUPFAM" id="SSF81464">
    <property type="entry name" value="Cytochrome c oxidase subunit II-like, transmembrane region"/>
    <property type="match status" value="1"/>
</dbReference>
<dbReference type="PROSITE" id="PS00078">
    <property type="entry name" value="COX2"/>
    <property type="match status" value="1"/>
</dbReference>
<dbReference type="PROSITE" id="PS50857">
    <property type="entry name" value="COX2_CUA"/>
    <property type="match status" value="1"/>
</dbReference>
<dbReference type="PROSITE" id="PS50999">
    <property type="entry name" value="COX2_TM"/>
    <property type="match status" value="1"/>
</dbReference>
<keyword id="KW-0186">Copper</keyword>
<keyword id="KW-0249">Electron transport</keyword>
<keyword id="KW-0460">Magnesium</keyword>
<keyword id="KW-0472">Membrane</keyword>
<keyword id="KW-0479">Metal-binding</keyword>
<keyword id="KW-0496">Mitochondrion</keyword>
<keyword id="KW-0999">Mitochondrion inner membrane</keyword>
<keyword id="KW-0597">Phosphoprotein</keyword>
<keyword id="KW-0679">Respiratory chain</keyword>
<keyword id="KW-1278">Translocase</keyword>
<keyword id="KW-0812">Transmembrane</keyword>
<keyword id="KW-1133">Transmembrane helix</keyword>
<keyword id="KW-0813">Transport</keyword>
<proteinExistence type="inferred from homology"/>
<organism>
    <name type="scientific">Lycalopex vetulus</name>
    <name type="common">Hoary fox</name>
    <name type="synonym">Pseudalopex vetulus</name>
    <dbReference type="NCBI Taxonomy" id="68734"/>
    <lineage>
        <taxon>Eukaryota</taxon>
        <taxon>Metazoa</taxon>
        <taxon>Chordata</taxon>
        <taxon>Craniata</taxon>
        <taxon>Vertebrata</taxon>
        <taxon>Euteleostomi</taxon>
        <taxon>Mammalia</taxon>
        <taxon>Eutheria</taxon>
        <taxon>Laurasiatheria</taxon>
        <taxon>Carnivora</taxon>
        <taxon>Caniformia</taxon>
        <taxon>Canidae</taxon>
        <taxon>Lycalopex</taxon>
    </lineage>
</organism>
<protein>
    <recommendedName>
        <fullName>Cytochrome c oxidase subunit 2</fullName>
        <ecNumber>7.1.1.9</ecNumber>
    </recommendedName>
    <alternativeName>
        <fullName>Cytochrome c oxidase polypeptide II</fullName>
    </alternativeName>
</protein>